<name>SELO_SHIB3</name>
<reference key="1">
    <citation type="submission" date="2008-05" db="EMBL/GenBank/DDBJ databases">
        <title>Complete sequence of Shigella boydii serotype 18 strain BS512.</title>
        <authorList>
            <person name="Rasko D.A."/>
            <person name="Rosovitz M."/>
            <person name="Maurelli A.T."/>
            <person name="Myers G."/>
            <person name="Seshadri R."/>
            <person name="Cer R."/>
            <person name="Jiang L."/>
            <person name="Ravel J."/>
            <person name="Sebastian Y."/>
        </authorList>
    </citation>
    <scope>NUCLEOTIDE SEQUENCE [LARGE SCALE GENOMIC DNA]</scope>
    <source>
        <strain>CDC 3083-94 / BS512</strain>
    </source>
</reference>
<accession>B2U355</accession>
<gene>
    <name evidence="1" type="primary">ydiU</name>
    <name evidence="1" type="synonym">selO</name>
    <name type="ordered locus">SbBS512_E1910</name>
</gene>
<dbReference type="EC" id="2.7.7.-" evidence="1"/>
<dbReference type="EC" id="2.7.7.108" evidence="1"/>
<dbReference type="EMBL" id="CP001063">
    <property type="protein sequence ID" value="ACD08668.1"/>
    <property type="molecule type" value="Genomic_DNA"/>
</dbReference>
<dbReference type="RefSeq" id="WP_000175717.1">
    <property type="nucleotide sequence ID" value="NC_010658.1"/>
</dbReference>
<dbReference type="SMR" id="B2U355"/>
<dbReference type="STRING" id="344609.SbBS512_E1910"/>
<dbReference type="KEGG" id="sbc:SbBS512_E1910"/>
<dbReference type="HOGENOM" id="CLU_010245_4_0_6"/>
<dbReference type="Proteomes" id="UP000001030">
    <property type="component" value="Chromosome"/>
</dbReference>
<dbReference type="GO" id="GO:0070733">
    <property type="term" value="F:AMPylase activity"/>
    <property type="evidence" value="ECO:0007669"/>
    <property type="project" value="TreeGrafter"/>
</dbReference>
<dbReference type="GO" id="GO:0005524">
    <property type="term" value="F:ATP binding"/>
    <property type="evidence" value="ECO:0007669"/>
    <property type="project" value="UniProtKB-UniRule"/>
</dbReference>
<dbReference type="GO" id="GO:0000287">
    <property type="term" value="F:magnesium ion binding"/>
    <property type="evidence" value="ECO:0007669"/>
    <property type="project" value="UniProtKB-UniRule"/>
</dbReference>
<dbReference type="HAMAP" id="MF_00692">
    <property type="entry name" value="YdiU_SelO"/>
    <property type="match status" value="1"/>
</dbReference>
<dbReference type="InterPro" id="IPR054838">
    <property type="entry name" value="adnlytase_SelO"/>
</dbReference>
<dbReference type="InterPro" id="IPR003846">
    <property type="entry name" value="SelO"/>
</dbReference>
<dbReference type="NCBIfam" id="NF040880">
    <property type="entry name" value="adnlytase_SelO"/>
    <property type="match status" value="1"/>
</dbReference>
<dbReference type="NCBIfam" id="NF000658">
    <property type="entry name" value="PRK00029.1"/>
    <property type="match status" value="1"/>
</dbReference>
<dbReference type="PANTHER" id="PTHR32057">
    <property type="entry name" value="PROTEIN ADENYLYLTRANSFERASE SELO, MITOCHONDRIAL"/>
    <property type="match status" value="1"/>
</dbReference>
<dbReference type="PANTHER" id="PTHR32057:SF14">
    <property type="entry name" value="PROTEIN ADENYLYLTRANSFERASE SELO, MITOCHONDRIAL"/>
    <property type="match status" value="1"/>
</dbReference>
<dbReference type="Pfam" id="PF02696">
    <property type="entry name" value="SelO"/>
    <property type="match status" value="1"/>
</dbReference>
<feature type="chain" id="PRO_1000132129" description="Protein nucleotidyltransferase YdiU">
    <location>
        <begin position="1"/>
        <end position="478"/>
    </location>
</feature>
<feature type="active site" description="Proton acceptor" evidence="1">
    <location>
        <position position="246"/>
    </location>
</feature>
<feature type="binding site" evidence="1">
    <location>
        <position position="84"/>
    </location>
    <ligand>
        <name>ATP</name>
        <dbReference type="ChEBI" id="CHEBI:30616"/>
    </ligand>
</feature>
<feature type="binding site" evidence="1">
    <location>
        <position position="86"/>
    </location>
    <ligand>
        <name>ATP</name>
        <dbReference type="ChEBI" id="CHEBI:30616"/>
    </ligand>
</feature>
<feature type="binding site" evidence="1">
    <location>
        <position position="87"/>
    </location>
    <ligand>
        <name>ATP</name>
        <dbReference type="ChEBI" id="CHEBI:30616"/>
    </ligand>
</feature>
<feature type="binding site" evidence="1">
    <location>
        <position position="107"/>
    </location>
    <ligand>
        <name>ATP</name>
        <dbReference type="ChEBI" id="CHEBI:30616"/>
    </ligand>
</feature>
<feature type="binding site" evidence="1">
    <location>
        <position position="119"/>
    </location>
    <ligand>
        <name>ATP</name>
        <dbReference type="ChEBI" id="CHEBI:30616"/>
    </ligand>
</feature>
<feature type="binding site" evidence="1">
    <location>
        <position position="120"/>
    </location>
    <ligand>
        <name>ATP</name>
        <dbReference type="ChEBI" id="CHEBI:30616"/>
    </ligand>
</feature>
<feature type="binding site" evidence="1">
    <location>
        <position position="170"/>
    </location>
    <ligand>
        <name>ATP</name>
        <dbReference type="ChEBI" id="CHEBI:30616"/>
    </ligand>
</feature>
<feature type="binding site" evidence="1">
    <location>
        <position position="177"/>
    </location>
    <ligand>
        <name>ATP</name>
        <dbReference type="ChEBI" id="CHEBI:30616"/>
    </ligand>
</feature>
<feature type="binding site" evidence="1">
    <location>
        <position position="247"/>
    </location>
    <ligand>
        <name>Mg(2+)</name>
        <dbReference type="ChEBI" id="CHEBI:18420"/>
    </ligand>
</feature>
<feature type="binding site" evidence="1">
    <location>
        <position position="256"/>
    </location>
    <ligand>
        <name>ATP</name>
        <dbReference type="ChEBI" id="CHEBI:30616"/>
    </ligand>
</feature>
<feature type="binding site" evidence="1">
    <location>
        <position position="256"/>
    </location>
    <ligand>
        <name>Mg(2+)</name>
        <dbReference type="ChEBI" id="CHEBI:18420"/>
    </ligand>
</feature>
<evidence type="ECO:0000255" key="1">
    <source>
        <dbReference type="HAMAP-Rule" id="MF_00692"/>
    </source>
</evidence>
<organism>
    <name type="scientific">Shigella boydii serotype 18 (strain CDC 3083-94 / BS512)</name>
    <dbReference type="NCBI Taxonomy" id="344609"/>
    <lineage>
        <taxon>Bacteria</taxon>
        <taxon>Pseudomonadati</taxon>
        <taxon>Pseudomonadota</taxon>
        <taxon>Gammaproteobacteria</taxon>
        <taxon>Enterobacterales</taxon>
        <taxon>Enterobacteriaceae</taxon>
        <taxon>Shigella</taxon>
    </lineage>
</organism>
<proteinExistence type="inferred from homology"/>
<keyword id="KW-0067">ATP-binding</keyword>
<keyword id="KW-0460">Magnesium</keyword>
<keyword id="KW-0464">Manganese</keyword>
<keyword id="KW-0479">Metal-binding</keyword>
<keyword id="KW-0547">Nucleotide-binding</keyword>
<keyword id="KW-0548">Nucleotidyltransferase</keyword>
<keyword id="KW-1185">Reference proteome</keyword>
<keyword id="KW-0808">Transferase</keyword>
<comment type="function">
    <text evidence="1">Nucleotidyltransferase involved in the post-translational modification of proteins. It can catalyze the addition of adenosine monophosphate (AMP) or uridine monophosphate (UMP) to a protein, resulting in modifications known as AMPylation and UMPylation.</text>
</comment>
<comment type="catalytic activity">
    <reaction evidence="1">
        <text>L-seryl-[protein] + ATP = 3-O-(5'-adenylyl)-L-seryl-[protein] + diphosphate</text>
        <dbReference type="Rhea" id="RHEA:58120"/>
        <dbReference type="Rhea" id="RHEA-COMP:9863"/>
        <dbReference type="Rhea" id="RHEA-COMP:15073"/>
        <dbReference type="ChEBI" id="CHEBI:29999"/>
        <dbReference type="ChEBI" id="CHEBI:30616"/>
        <dbReference type="ChEBI" id="CHEBI:33019"/>
        <dbReference type="ChEBI" id="CHEBI:142516"/>
        <dbReference type="EC" id="2.7.7.108"/>
    </reaction>
</comment>
<comment type="catalytic activity">
    <reaction evidence="1">
        <text>L-threonyl-[protein] + ATP = 3-O-(5'-adenylyl)-L-threonyl-[protein] + diphosphate</text>
        <dbReference type="Rhea" id="RHEA:54292"/>
        <dbReference type="Rhea" id="RHEA-COMP:11060"/>
        <dbReference type="Rhea" id="RHEA-COMP:13847"/>
        <dbReference type="ChEBI" id="CHEBI:30013"/>
        <dbReference type="ChEBI" id="CHEBI:30616"/>
        <dbReference type="ChEBI" id="CHEBI:33019"/>
        <dbReference type="ChEBI" id="CHEBI:138113"/>
        <dbReference type="EC" id="2.7.7.108"/>
    </reaction>
</comment>
<comment type="catalytic activity">
    <reaction evidence="1">
        <text>L-tyrosyl-[protein] + ATP = O-(5'-adenylyl)-L-tyrosyl-[protein] + diphosphate</text>
        <dbReference type="Rhea" id="RHEA:54288"/>
        <dbReference type="Rhea" id="RHEA-COMP:10136"/>
        <dbReference type="Rhea" id="RHEA-COMP:13846"/>
        <dbReference type="ChEBI" id="CHEBI:30616"/>
        <dbReference type="ChEBI" id="CHEBI:33019"/>
        <dbReference type="ChEBI" id="CHEBI:46858"/>
        <dbReference type="ChEBI" id="CHEBI:83624"/>
        <dbReference type="EC" id="2.7.7.108"/>
    </reaction>
</comment>
<comment type="catalytic activity">
    <reaction evidence="1">
        <text>L-histidyl-[protein] + UTP = N(tele)-(5'-uridylyl)-L-histidyl-[protein] + diphosphate</text>
        <dbReference type="Rhea" id="RHEA:83891"/>
        <dbReference type="Rhea" id="RHEA-COMP:9745"/>
        <dbReference type="Rhea" id="RHEA-COMP:20239"/>
        <dbReference type="ChEBI" id="CHEBI:29979"/>
        <dbReference type="ChEBI" id="CHEBI:33019"/>
        <dbReference type="ChEBI" id="CHEBI:46398"/>
        <dbReference type="ChEBI" id="CHEBI:233474"/>
    </reaction>
</comment>
<comment type="catalytic activity">
    <reaction evidence="1">
        <text>L-seryl-[protein] + UTP = O-(5'-uridylyl)-L-seryl-[protein] + diphosphate</text>
        <dbReference type="Rhea" id="RHEA:64604"/>
        <dbReference type="Rhea" id="RHEA-COMP:9863"/>
        <dbReference type="Rhea" id="RHEA-COMP:16635"/>
        <dbReference type="ChEBI" id="CHEBI:29999"/>
        <dbReference type="ChEBI" id="CHEBI:33019"/>
        <dbReference type="ChEBI" id="CHEBI:46398"/>
        <dbReference type="ChEBI" id="CHEBI:156051"/>
    </reaction>
</comment>
<comment type="catalytic activity">
    <reaction evidence="1">
        <text>L-tyrosyl-[protein] + UTP = O-(5'-uridylyl)-L-tyrosyl-[protein] + diphosphate</text>
        <dbReference type="Rhea" id="RHEA:83887"/>
        <dbReference type="Rhea" id="RHEA-COMP:10136"/>
        <dbReference type="Rhea" id="RHEA-COMP:20238"/>
        <dbReference type="ChEBI" id="CHEBI:33019"/>
        <dbReference type="ChEBI" id="CHEBI:46398"/>
        <dbReference type="ChEBI" id="CHEBI:46858"/>
        <dbReference type="ChEBI" id="CHEBI:90602"/>
    </reaction>
</comment>
<comment type="cofactor">
    <cofactor evidence="1">
        <name>Mg(2+)</name>
        <dbReference type="ChEBI" id="CHEBI:18420"/>
    </cofactor>
    <cofactor evidence="1">
        <name>Mn(2+)</name>
        <dbReference type="ChEBI" id="CHEBI:29035"/>
    </cofactor>
</comment>
<comment type="similarity">
    <text evidence="1">Belongs to the SELO family.</text>
</comment>
<protein>
    <recommendedName>
        <fullName evidence="1">Protein nucleotidyltransferase YdiU</fullName>
        <ecNumber evidence="1">2.7.7.-</ecNumber>
    </recommendedName>
    <alternativeName>
        <fullName evidence="1">Protein adenylyltransferase YdiU</fullName>
        <ecNumber evidence="1">2.7.7.108</ecNumber>
    </alternativeName>
    <alternativeName>
        <fullName evidence="1">Protein uridylyltransferase YdiU</fullName>
        <ecNumber evidence="1">2.7.7.-</ecNumber>
    </alternativeName>
</protein>
<sequence length="478" mass="54455">MTLSFVTRWRDELPETYTALSPTPLNNARLVWHNTELANTLSIPSSLFKNGAGVWGGEALLPGMSPLAQVYSGHQFGVWAGQLGDGRGILLGEQLLADGTTMDWHLKGAGLTPYSRMGDGRAVLRSTIRESLASEAMHYLGIPTTRALSIVTSDSPVYRETAEPGAMLMRVAPSHLRFGHFEHFYYRRESEKVRQLADFAIRHYWSHLEDDEDKYRLWFSDVVARTASLIAQWQTVGFAHGVMNTDNMSLLGLTLDYGPFGFLDDYEPGFICNHSDHQGRYSFDNQPAVALWNLQRLAQTLSPFVAVDALNEALDSYQQVLLTHYGQRMRQKLGFMTEQKEDNALLNELFSLMARERSDYTRTFRMLSLTEQHSAASPLRDEFIDRAAFDDWFARYRGRLQQDEVSDSERQQLMQSVNPALVLRNWLAQRAIEAAEKGDMMELHRLHEALRNPFSDRDDDYVSRPPDWGKRLEVSCSS</sequence>